<reference key="1">
    <citation type="journal article" date="2006" name="Proc. Natl. Acad. Sci. U.S.A.">
        <title>The complete genome sequence of Lactobacillus bulgaricus reveals extensive and ongoing reductive evolution.</title>
        <authorList>
            <person name="van de Guchte M."/>
            <person name="Penaud S."/>
            <person name="Grimaldi C."/>
            <person name="Barbe V."/>
            <person name="Bryson K."/>
            <person name="Nicolas P."/>
            <person name="Robert C."/>
            <person name="Oztas S."/>
            <person name="Mangenot S."/>
            <person name="Couloux A."/>
            <person name="Loux V."/>
            <person name="Dervyn R."/>
            <person name="Bossy R."/>
            <person name="Bolotin A."/>
            <person name="Batto J.-M."/>
            <person name="Walunas T."/>
            <person name="Gibrat J.-F."/>
            <person name="Bessieres P."/>
            <person name="Weissenbach J."/>
            <person name="Ehrlich S.D."/>
            <person name="Maguin E."/>
        </authorList>
    </citation>
    <scope>NUCLEOTIDE SEQUENCE [LARGE SCALE GENOMIC DNA]</scope>
    <source>
        <strain>ATCC 11842 / DSM 20081 / BCRC 10696 / JCM 1002 / NBRC 13953 / NCIMB 11778 / NCTC 12712 / WDCM 00102 / Lb 14</strain>
    </source>
</reference>
<protein>
    <recommendedName>
        <fullName evidence="1">Small ribosomal subunit protein uS14</fullName>
    </recommendedName>
    <alternativeName>
        <fullName evidence="3">30S ribosomal protein S14 type Z</fullName>
    </alternativeName>
</protein>
<keyword id="KW-0479">Metal-binding</keyword>
<keyword id="KW-1185">Reference proteome</keyword>
<keyword id="KW-0687">Ribonucleoprotein</keyword>
<keyword id="KW-0689">Ribosomal protein</keyword>
<keyword id="KW-0694">RNA-binding</keyword>
<keyword id="KW-0699">rRNA-binding</keyword>
<keyword id="KW-0862">Zinc</keyword>
<dbReference type="EMBL" id="CR954253">
    <property type="protein sequence ID" value="CAI97244.1"/>
    <property type="molecule type" value="Genomic_DNA"/>
</dbReference>
<dbReference type="RefSeq" id="WP_002878192.1">
    <property type="nucleotide sequence ID" value="NZ_JQAV01000001.1"/>
</dbReference>
<dbReference type="SMR" id="Q1GBK5"/>
<dbReference type="STRING" id="390333.Ldb0409"/>
<dbReference type="KEGG" id="ldb:Ldb0409"/>
<dbReference type="eggNOG" id="COG0199">
    <property type="taxonomic scope" value="Bacteria"/>
</dbReference>
<dbReference type="HOGENOM" id="CLU_139869_3_0_9"/>
<dbReference type="BioCyc" id="LDEL390333:LDB_RS09875-MONOMER"/>
<dbReference type="Proteomes" id="UP000001259">
    <property type="component" value="Chromosome"/>
</dbReference>
<dbReference type="GO" id="GO:0015935">
    <property type="term" value="C:small ribosomal subunit"/>
    <property type="evidence" value="ECO:0007669"/>
    <property type="project" value="TreeGrafter"/>
</dbReference>
<dbReference type="GO" id="GO:0019843">
    <property type="term" value="F:rRNA binding"/>
    <property type="evidence" value="ECO:0007669"/>
    <property type="project" value="UniProtKB-UniRule"/>
</dbReference>
<dbReference type="GO" id="GO:0003735">
    <property type="term" value="F:structural constituent of ribosome"/>
    <property type="evidence" value="ECO:0007669"/>
    <property type="project" value="InterPro"/>
</dbReference>
<dbReference type="GO" id="GO:0008270">
    <property type="term" value="F:zinc ion binding"/>
    <property type="evidence" value="ECO:0007669"/>
    <property type="project" value="UniProtKB-UniRule"/>
</dbReference>
<dbReference type="GO" id="GO:0006412">
    <property type="term" value="P:translation"/>
    <property type="evidence" value="ECO:0007669"/>
    <property type="project" value="UniProtKB-UniRule"/>
</dbReference>
<dbReference type="FunFam" id="4.10.830.10:FF:000001">
    <property type="entry name" value="30S ribosomal protein S14 type Z"/>
    <property type="match status" value="1"/>
</dbReference>
<dbReference type="Gene3D" id="4.10.830.10">
    <property type="entry name" value="30s Ribosomal Protein S14, Chain N"/>
    <property type="match status" value="1"/>
</dbReference>
<dbReference type="HAMAP" id="MF_01364_B">
    <property type="entry name" value="Ribosomal_uS14_2_B"/>
    <property type="match status" value="1"/>
</dbReference>
<dbReference type="InterPro" id="IPR001209">
    <property type="entry name" value="Ribosomal_uS14"/>
</dbReference>
<dbReference type="InterPro" id="IPR023053">
    <property type="entry name" value="Ribosomal_uS14_bact"/>
</dbReference>
<dbReference type="InterPro" id="IPR043140">
    <property type="entry name" value="Ribosomal_uS14_sf"/>
</dbReference>
<dbReference type="NCBIfam" id="NF005974">
    <property type="entry name" value="PRK08061.1"/>
    <property type="match status" value="1"/>
</dbReference>
<dbReference type="PANTHER" id="PTHR19836">
    <property type="entry name" value="30S RIBOSOMAL PROTEIN S14"/>
    <property type="match status" value="1"/>
</dbReference>
<dbReference type="PANTHER" id="PTHR19836:SF26">
    <property type="entry name" value="SMALL RIBOSOMAL SUBUNIT PROTEIN US14B"/>
    <property type="match status" value="1"/>
</dbReference>
<dbReference type="Pfam" id="PF00253">
    <property type="entry name" value="Ribosomal_S14"/>
    <property type="match status" value="1"/>
</dbReference>
<dbReference type="SUPFAM" id="SSF57716">
    <property type="entry name" value="Glucocorticoid receptor-like (DNA-binding domain)"/>
    <property type="match status" value="1"/>
</dbReference>
<evidence type="ECO:0000255" key="1">
    <source>
        <dbReference type="HAMAP-Rule" id="MF_01364"/>
    </source>
</evidence>
<evidence type="ECO:0000256" key="2">
    <source>
        <dbReference type="SAM" id="MobiDB-lite"/>
    </source>
</evidence>
<evidence type="ECO:0000305" key="3"/>
<comment type="function">
    <text evidence="1">Binds 16S rRNA, required for the assembly of 30S particles and may also be responsible for determining the conformation of the 16S rRNA at the A site.</text>
</comment>
<comment type="cofactor">
    <cofactor evidence="1">
        <name>Zn(2+)</name>
        <dbReference type="ChEBI" id="CHEBI:29105"/>
    </cofactor>
    <text evidence="1">Binds 1 zinc ion per subunit.</text>
</comment>
<comment type="subunit">
    <text evidence="1">Part of the 30S ribosomal subunit. Contacts proteins S3 and S10.</text>
</comment>
<comment type="similarity">
    <text evidence="1">Belongs to the universal ribosomal protein uS14 family. Zinc-binding uS14 subfamily.</text>
</comment>
<feature type="chain" id="PRO_0000269107" description="Small ribosomal subunit protein uS14">
    <location>
        <begin position="1"/>
        <end position="61"/>
    </location>
</feature>
<feature type="region of interest" description="Disordered" evidence="2">
    <location>
        <begin position="1"/>
        <end position="20"/>
    </location>
</feature>
<feature type="compositionally biased region" description="Basic residues" evidence="2">
    <location>
        <begin position="1"/>
        <end position="14"/>
    </location>
</feature>
<feature type="binding site" evidence="1">
    <location>
        <position position="24"/>
    </location>
    <ligand>
        <name>Zn(2+)</name>
        <dbReference type="ChEBI" id="CHEBI:29105"/>
    </ligand>
</feature>
<feature type="binding site" evidence="1">
    <location>
        <position position="27"/>
    </location>
    <ligand>
        <name>Zn(2+)</name>
        <dbReference type="ChEBI" id="CHEBI:29105"/>
    </ligand>
</feature>
<feature type="binding site" evidence="1">
    <location>
        <position position="40"/>
    </location>
    <ligand>
        <name>Zn(2+)</name>
        <dbReference type="ChEBI" id="CHEBI:29105"/>
    </ligand>
</feature>
<feature type="binding site" evidence="1">
    <location>
        <position position="43"/>
    </location>
    <ligand>
        <name>Zn(2+)</name>
        <dbReference type="ChEBI" id="CHEBI:29105"/>
    </ligand>
</feature>
<sequence length="61" mass="7117">MAKTSQKVRNHRPAKFSSREYTRCERCGRPHSVYRKFGLCRICLKELGHKGQIPGLKKASW</sequence>
<name>RS14Z_LACDA</name>
<proteinExistence type="inferred from homology"/>
<accession>Q1GBK5</accession>
<organism>
    <name type="scientific">Lactobacillus delbrueckii subsp. bulgaricus (strain ATCC 11842 / DSM 20081 / BCRC 10696 / JCM 1002 / NBRC 13953 / NCIMB 11778 / NCTC 12712 / WDCM 00102 / Lb 14)</name>
    <dbReference type="NCBI Taxonomy" id="390333"/>
    <lineage>
        <taxon>Bacteria</taxon>
        <taxon>Bacillati</taxon>
        <taxon>Bacillota</taxon>
        <taxon>Bacilli</taxon>
        <taxon>Lactobacillales</taxon>
        <taxon>Lactobacillaceae</taxon>
        <taxon>Lactobacillus</taxon>
    </lineage>
</organism>
<gene>
    <name evidence="1" type="primary">rpsZ</name>
    <name evidence="1" type="synonym">rpsN</name>
    <name type="ordered locus">Ldb0409</name>
</gene>